<dbReference type="EMBL" id="X74446">
    <property type="protein sequence ID" value="CAA52457.1"/>
    <property type="molecule type" value="Genomic_DNA"/>
</dbReference>
<dbReference type="PIR" id="S35978">
    <property type="entry name" value="S35978"/>
</dbReference>
<dbReference type="STRING" id="585.DR95_2760"/>
<dbReference type="eggNOG" id="COG0244">
    <property type="taxonomic scope" value="Bacteria"/>
</dbReference>
<dbReference type="GO" id="GO:1990904">
    <property type="term" value="C:ribonucleoprotein complex"/>
    <property type="evidence" value="ECO:0007669"/>
    <property type="project" value="UniProtKB-KW"/>
</dbReference>
<dbReference type="GO" id="GO:0005840">
    <property type="term" value="C:ribosome"/>
    <property type="evidence" value="ECO:0007669"/>
    <property type="project" value="UniProtKB-KW"/>
</dbReference>
<dbReference type="GO" id="GO:0019843">
    <property type="term" value="F:rRNA binding"/>
    <property type="evidence" value="ECO:0007669"/>
    <property type="project" value="UniProtKB-KW"/>
</dbReference>
<proteinExistence type="inferred from homology"/>
<sequence length="21" mass="2215">MALNLQDKQAIVAEVSEVAKG</sequence>
<protein>
    <recommendedName>
        <fullName evidence="2">Large ribosomal subunit protein uL10</fullName>
    </recommendedName>
    <alternativeName>
        <fullName>50S ribosomal protein L10</fullName>
    </alternativeName>
</protein>
<accession>P51411</accession>
<evidence type="ECO:0000250" key="1"/>
<evidence type="ECO:0000305" key="2"/>
<gene>
    <name type="primary">rplJ</name>
</gene>
<comment type="function">
    <text evidence="1">Forms part of the ribosomal stalk, playing a central role in the interaction of the ribosome with GTP-bound translation factors.</text>
</comment>
<comment type="subunit">
    <text evidence="1">Part of the ribosomal stalk of the 50S ribosomal subunit. The N-terminus interacts with L11 and the large rRNA to form the base of the stalk. The C-terminus forms an elongated spine to which L12 dimers bind in a sequential fashion forming a multimeric L10(L12)X complex (By similarity).</text>
</comment>
<comment type="similarity">
    <text evidence="2">Belongs to the universal ribosomal protein uL10 family.</text>
</comment>
<reference key="1">
    <citation type="submission" date="1993-08" db="EMBL/GenBank/DDBJ databases">
        <authorList>
            <person name="Zhyvoloup A.N."/>
        </authorList>
    </citation>
    <scope>NUCLEOTIDE SEQUENCE [GENOMIC DNA]</scope>
</reference>
<organism>
    <name type="scientific">Proteus vulgaris</name>
    <dbReference type="NCBI Taxonomy" id="585"/>
    <lineage>
        <taxon>Bacteria</taxon>
        <taxon>Pseudomonadati</taxon>
        <taxon>Pseudomonadota</taxon>
        <taxon>Gammaproteobacteria</taxon>
        <taxon>Enterobacterales</taxon>
        <taxon>Morganellaceae</taxon>
        <taxon>Proteus</taxon>
    </lineage>
</organism>
<keyword id="KW-0687">Ribonucleoprotein</keyword>
<keyword id="KW-0689">Ribosomal protein</keyword>
<keyword id="KW-0694">RNA-binding</keyword>
<keyword id="KW-0699">rRNA-binding</keyword>
<feature type="initiator methionine" description="Removed" evidence="1">
    <location>
        <position position="1"/>
    </location>
</feature>
<feature type="chain" id="PRO_0000154689" description="Large ribosomal subunit protein uL10">
    <location>
        <begin position="2"/>
        <end position="21" status="greater than"/>
    </location>
</feature>
<feature type="non-terminal residue">
    <location>
        <position position="21"/>
    </location>
</feature>
<name>RL10_PROVU</name>